<accession>B8IYK3</accession>
<protein>
    <recommendedName>
        <fullName evidence="1">Large ribosomal subunit protein uL5</fullName>
    </recommendedName>
    <alternativeName>
        <fullName evidence="2">50S ribosomal protein L5</fullName>
    </alternativeName>
</protein>
<name>RL5_DESDA</name>
<sequence>MTRLEKIYREKVVPVMQKEFSYSSSMQLPGIEKISLNIGLGAASQNNKLMEEAVAELSAIAGQKAVVTRAKKSIAAFKLREGMPIGARVTLRRDRMWDFLDKLMNFALPRVRDFRGIPDRGFDGRGNFTLGIKEHTIFPELEVDRVENPKGMNITIVTTAATDKEGKFLLDQLGMPFRK</sequence>
<gene>
    <name evidence="1" type="primary">rplE</name>
    <name type="ordered locus">Ddes_0672</name>
</gene>
<comment type="function">
    <text evidence="1">This is one of the proteins that bind and probably mediate the attachment of the 5S RNA into the large ribosomal subunit, where it forms part of the central protuberance. In the 70S ribosome it contacts protein S13 of the 30S subunit (bridge B1b), connecting the 2 subunits; this bridge is implicated in subunit movement. Contacts the P site tRNA; the 5S rRNA and some of its associated proteins might help stabilize positioning of ribosome-bound tRNAs.</text>
</comment>
<comment type="subunit">
    <text evidence="1">Part of the 50S ribosomal subunit; part of the 5S rRNA/L5/L18/L25 subcomplex. Contacts the 5S rRNA and the P site tRNA. Forms a bridge to the 30S subunit in the 70S ribosome.</text>
</comment>
<comment type="similarity">
    <text evidence="1">Belongs to the universal ribosomal protein uL5 family.</text>
</comment>
<reference key="1">
    <citation type="submission" date="2009-01" db="EMBL/GenBank/DDBJ databases">
        <title>Complete sequence of Desulfovibrio desulfuricans subsp. desulfuricans str. ATCC 27774.</title>
        <authorList>
            <consortium name="US DOE Joint Genome Institute"/>
            <person name="Lucas S."/>
            <person name="Copeland A."/>
            <person name="Lapidus A."/>
            <person name="Glavina del Rio T."/>
            <person name="Tice H."/>
            <person name="Bruce D."/>
            <person name="Goodwin L."/>
            <person name="Pitluck S."/>
            <person name="Sims D."/>
            <person name="Lu M."/>
            <person name="Kiss H."/>
            <person name="Meineke L."/>
            <person name="Brettin T."/>
            <person name="Detter J.C."/>
            <person name="Han C."/>
            <person name="Larimer F."/>
            <person name="Land M."/>
            <person name="Hauser L."/>
            <person name="Kyrpides N."/>
            <person name="Ovchinnikova G."/>
            <person name="Hazen T.C."/>
        </authorList>
    </citation>
    <scope>NUCLEOTIDE SEQUENCE [LARGE SCALE GENOMIC DNA]</scope>
    <source>
        <strain>ATCC 27774 / DSM 6949 / MB</strain>
    </source>
</reference>
<dbReference type="EMBL" id="CP001358">
    <property type="protein sequence ID" value="ACL48580.1"/>
    <property type="molecule type" value="Genomic_DNA"/>
</dbReference>
<dbReference type="SMR" id="B8IYK3"/>
<dbReference type="STRING" id="525146.Ddes_0672"/>
<dbReference type="KEGG" id="dds:Ddes_0672"/>
<dbReference type="eggNOG" id="COG0094">
    <property type="taxonomic scope" value="Bacteria"/>
</dbReference>
<dbReference type="HOGENOM" id="CLU_061015_2_1_7"/>
<dbReference type="GO" id="GO:1990904">
    <property type="term" value="C:ribonucleoprotein complex"/>
    <property type="evidence" value="ECO:0007669"/>
    <property type="project" value="UniProtKB-KW"/>
</dbReference>
<dbReference type="GO" id="GO:0005840">
    <property type="term" value="C:ribosome"/>
    <property type="evidence" value="ECO:0007669"/>
    <property type="project" value="UniProtKB-KW"/>
</dbReference>
<dbReference type="GO" id="GO:0019843">
    <property type="term" value="F:rRNA binding"/>
    <property type="evidence" value="ECO:0007669"/>
    <property type="project" value="UniProtKB-UniRule"/>
</dbReference>
<dbReference type="GO" id="GO:0003735">
    <property type="term" value="F:structural constituent of ribosome"/>
    <property type="evidence" value="ECO:0007669"/>
    <property type="project" value="InterPro"/>
</dbReference>
<dbReference type="GO" id="GO:0000049">
    <property type="term" value="F:tRNA binding"/>
    <property type="evidence" value="ECO:0007669"/>
    <property type="project" value="UniProtKB-UniRule"/>
</dbReference>
<dbReference type="GO" id="GO:0006412">
    <property type="term" value="P:translation"/>
    <property type="evidence" value="ECO:0007669"/>
    <property type="project" value="UniProtKB-UniRule"/>
</dbReference>
<dbReference type="FunFam" id="3.30.1440.10:FF:000001">
    <property type="entry name" value="50S ribosomal protein L5"/>
    <property type="match status" value="1"/>
</dbReference>
<dbReference type="Gene3D" id="3.30.1440.10">
    <property type="match status" value="1"/>
</dbReference>
<dbReference type="HAMAP" id="MF_01333_B">
    <property type="entry name" value="Ribosomal_uL5_B"/>
    <property type="match status" value="1"/>
</dbReference>
<dbReference type="InterPro" id="IPR002132">
    <property type="entry name" value="Ribosomal_uL5"/>
</dbReference>
<dbReference type="InterPro" id="IPR020930">
    <property type="entry name" value="Ribosomal_uL5_bac-type"/>
</dbReference>
<dbReference type="InterPro" id="IPR031309">
    <property type="entry name" value="Ribosomal_uL5_C"/>
</dbReference>
<dbReference type="InterPro" id="IPR020929">
    <property type="entry name" value="Ribosomal_uL5_CS"/>
</dbReference>
<dbReference type="InterPro" id="IPR022803">
    <property type="entry name" value="Ribosomal_uL5_dom_sf"/>
</dbReference>
<dbReference type="InterPro" id="IPR031310">
    <property type="entry name" value="Ribosomal_uL5_N"/>
</dbReference>
<dbReference type="NCBIfam" id="NF000585">
    <property type="entry name" value="PRK00010.1"/>
    <property type="match status" value="1"/>
</dbReference>
<dbReference type="PANTHER" id="PTHR11994">
    <property type="entry name" value="60S RIBOSOMAL PROTEIN L11-RELATED"/>
    <property type="match status" value="1"/>
</dbReference>
<dbReference type="Pfam" id="PF00281">
    <property type="entry name" value="Ribosomal_L5"/>
    <property type="match status" value="1"/>
</dbReference>
<dbReference type="Pfam" id="PF00673">
    <property type="entry name" value="Ribosomal_L5_C"/>
    <property type="match status" value="1"/>
</dbReference>
<dbReference type="PIRSF" id="PIRSF002161">
    <property type="entry name" value="Ribosomal_L5"/>
    <property type="match status" value="1"/>
</dbReference>
<dbReference type="SUPFAM" id="SSF55282">
    <property type="entry name" value="RL5-like"/>
    <property type="match status" value="1"/>
</dbReference>
<dbReference type="PROSITE" id="PS00358">
    <property type="entry name" value="RIBOSOMAL_L5"/>
    <property type="match status" value="1"/>
</dbReference>
<evidence type="ECO:0000255" key="1">
    <source>
        <dbReference type="HAMAP-Rule" id="MF_01333"/>
    </source>
</evidence>
<evidence type="ECO:0000305" key="2"/>
<organism>
    <name type="scientific">Desulfovibrio desulfuricans (strain ATCC 27774 / DSM 6949 / MB)</name>
    <dbReference type="NCBI Taxonomy" id="525146"/>
    <lineage>
        <taxon>Bacteria</taxon>
        <taxon>Pseudomonadati</taxon>
        <taxon>Thermodesulfobacteriota</taxon>
        <taxon>Desulfovibrionia</taxon>
        <taxon>Desulfovibrionales</taxon>
        <taxon>Desulfovibrionaceae</taxon>
        <taxon>Desulfovibrio</taxon>
    </lineage>
</organism>
<proteinExistence type="inferred from homology"/>
<feature type="chain" id="PRO_1000166128" description="Large ribosomal subunit protein uL5">
    <location>
        <begin position="1"/>
        <end position="179"/>
    </location>
</feature>
<keyword id="KW-0687">Ribonucleoprotein</keyword>
<keyword id="KW-0689">Ribosomal protein</keyword>
<keyword id="KW-0694">RNA-binding</keyword>
<keyword id="KW-0699">rRNA-binding</keyword>
<keyword id="KW-0820">tRNA-binding</keyword>